<proteinExistence type="inferred from homology"/>
<name>PGK_FRATN</name>
<comment type="catalytic activity">
    <reaction evidence="1">
        <text>(2R)-3-phosphoglycerate + ATP = (2R)-3-phospho-glyceroyl phosphate + ADP</text>
        <dbReference type="Rhea" id="RHEA:14801"/>
        <dbReference type="ChEBI" id="CHEBI:30616"/>
        <dbReference type="ChEBI" id="CHEBI:57604"/>
        <dbReference type="ChEBI" id="CHEBI:58272"/>
        <dbReference type="ChEBI" id="CHEBI:456216"/>
        <dbReference type="EC" id="2.7.2.3"/>
    </reaction>
</comment>
<comment type="pathway">
    <text evidence="1">Carbohydrate degradation; glycolysis; pyruvate from D-glyceraldehyde 3-phosphate: step 2/5.</text>
</comment>
<comment type="subunit">
    <text evidence="1">Monomer.</text>
</comment>
<comment type="subcellular location">
    <subcellularLocation>
        <location evidence="1">Cytoplasm</location>
    </subcellularLocation>
</comment>
<comment type="similarity">
    <text evidence="1">Belongs to the phosphoglycerate kinase family.</text>
</comment>
<reference key="1">
    <citation type="journal article" date="2007" name="Genome Biol.">
        <title>Comparison of Francisella tularensis genomes reveals evolutionary events associated with the emergence of human pathogenic strains.</title>
        <authorList>
            <person name="Rohmer L."/>
            <person name="Fong C."/>
            <person name="Abmayr S."/>
            <person name="Wasnick M."/>
            <person name="Larson Freeman T.J."/>
            <person name="Radey M."/>
            <person name="Guina T."/>
            <person name="Svensson K."/>
            <person name="Hayden H.S."/>
            <person name="Jacobs M."/>
            <person name="Gallagher L.A."/>
            <person name="Manoil C."/>
            <person name="Ernst R.K."/>
            <person name="Drees B."/>
            <person name="Buckley D."/>
            <person name="Haugen E."/>
            <person name="Bovee D."/>
            <person name="Zhou Y."/>
            <person name="Chang J."/>
            <person name="Levy R."/>
            <person name="Lim R."/>
            <person name="Gillett W."/>
            <person name="Guenthener D."/>
            <person name="Kang A."/>
            <person name="Shaffer S.A."/>
            <person name="Taylor G."/>
            <person name="Chen J."/>
            <person name="Gallis B."/>
            <person name="D'Argenio D.A."/>
            <person name="Forsman M."/>
            <person name="Olson M.V."/>
            <person name="Goodlett D.R."/>
            <person name="Kaul R."/>
            <person name="Miller S.I."/>
            <person name="Brittnacher M.J."/>
        </authorList>
    </citation>
    <scope>NUCLEOTIDE SEQUENCE [LARGE SCALE GENOMIC DNA]</scope>
    <source>
        <strain>U112</strain>
    </source>
</reference>
<dbReference type="EC" id="2.7.2.3" evidence="1"/>
<dbReference type="EMBL" id="CP000439">
    <property type="protein sequence ID" value="ABK90206.1"/>
    <property type="molecule type" value="Genomic_DNA"/>
</dbReference>
<dbReference type="RefSeq" id="WP_003040169.1">
    <property type="nucleotide sequence ID" value="NC_008601.1"/>
</dbReference>
<dbReference type="SMR" id="A0Q7J1"/>
<dbReference type="KEGG" id="ftn:FTN_1331"/>
<dbReference type="KEGG" id="ftx:AW25_672"/>
<dbReference type="BioCyc" id="FTUL401614:G1G75-1376-MONOMER"/>
<dbReference type="UniPathway" id="UPA00109">
    <property type="reaction ID" value="UER00185"/>
</dbReference>
<dbReference type="Proteomes" id="UP000000762">
    <property type="component" value="Chromosome"/>
</dbReference>
<dbReference type="GO" id="GO:0005829">
    <property type="term" value="C:cytosol"/>
    <property type="evidence" value="ECO:0007669"/>
    <property type="project" value="TreeGrafter"/>
</dbReference>
<dbReference type="GO" id="GO:0043531">
    <property type="term" value="F:ADP binding"/>
    <property type="evidence" value="ECO:0007669"/>
    <property type="project" value="TreeGrafter"/>
</dbReference>
<dbReference type="GO" id="GO:0005524">
    <property type="term" value="F:ATP binding"/>
    <property type="evidence" value="ECO:0007669"/>
    <property type="project" value="UniProtKB-KW"/>
</dbReference>
<dbReference type="GO" id="GO:0004618">
    <property type="term" value="F:phosphoglycerate kinase activity"/>
    <property type="evidence" value="ECO:0007669"/>
    <property type="project" value="UniProtKB-UniRule"/>
</dbReference>
<dbReference type="GO" id="GO:0006094">
    <property type="term" value="P:gluconeogenesis"/>
    <property type="evidence" value="ECO:0007669"/>
    <property type="project" value="TreeGrafter"/>
</dbReference>
<dbReference type="GO" id="GO:0006096">
    <property type="term" value="P:glycolytic process"/>
    <property type="evidence" value="ECO:0007669"/>
    <property type="project" value="UniProtKB-UniRule"/>
</dbReference>
<dbReference type="FunFam" id="3.40.50.1260:FF:000001">
    <property type="entry name" value="Phosphoglycerate kinase"/>
    <property type="match status" value="1"/>
</dbReference>
<dbReference type="FunFam" id="3.40.50.1260:FF:000005">
    <property type="entry name" value="Phosphoglycerate kinase"/>
    <property type="match status" value="1"/>
</dbReference>
<dbReference type="Gene3D" id="3.40.50.1260">
    <property type="entry name" value="Phosphoglycerate kinase, N-terminal domain"/>
    <property type="match status" value="2"/>
</dbReference>
<dbReference type="HAMAP" id="MF_00145">
    <property type="entry name" value="Phosphoglyc_kinase"/>
    <property type="match status" value="1"/>
</dbReference>
<dbReference type="InterPro" id="IPR001576">
    <property type="entry name" value="Phosphoglycerate_kinase"/>
</dbReference>
<dbReference type="InterPro" id="IPR015911">
    <property type="entry name" value="Phosphoglycerate_kinase_CS"/>
</dbReference>
<dbReference type="InterPro" id="IPR015824">
    <property type="entry name" value="Phosphoglycerate_kinase_N"/>
</dbReference>
<dbReference type="InterPro" id="IPR036043">
    <property type="entry name" value="Phosphoglycerate_kinase_sf"/>
</dbReference>
<dbReference type="PANTHER" id="PTHR11406">
    <property type="entry name" value="PHOSPHOGLYCERATE KINASE"/>
    <property type="match status" value="1"/>
</dbReference>
<dbReference type="PANTHER" id="PTHR11406:SF23">
    <property type="entry name" value="PHOSPHOGLYCERATE KINASE 1, CHLOROPLASTIC-RELATED"/>
    <property type="match status" value="1"/>
</dbReference>
<dbReference type="Pfam" id="PF00162">
    <property type="entry name" value="PGK"/>
    <property type="match status" value="1"/>
</dbReference>
<dbReference type="PIRSF" id="PIRSF000724">
    <property type="entry name" value="Pgk"/>
    <property type="match status" value="1"/>
</dbReference>
<dbReference type="PRINTS" id="PR00477">
    <property type="entry name" value="PHGLYCKINASE"/>
</dbReference>
<dbReference type="SUPFAM" id="SSF53748">
    <property type="entry name" value="Phosphoglycerate kinase"/>
    <property type="match status" value="1"/>
</dbReference>
<dbReference type="PROSITE" id="PS00111">
    <property type="entry name" value="PGLYCERATE_KINASE"/>
    <property type="match status" value="1"/>
</dbReference>
<protein>
    <recommendedName>
        <fullName evidence="1">Phosphoglycerate kinase</fullName>
        <ecNumber evidence="1">2.7.2.3</ecNumber>
    </recommendedName>
</protein>
<feature type="chain" id="PRO_1000057992" description="Phosphoglycerate kinase">
    <location>
        <begin position="1"/>
        <end position="392"/>
    </location>
</feature>
<feature type="binding site" evidence="1">
    <location>
        <begin position="21"/>
        <end position="23"/>
    </location>
    <ligand>
        <name>substrate</name>
    </ligand>
</feature>
<feature type="binding site" evidence="1">
    <location>
        <position position="36"/>
    </location>
    <ligand>
        <name>substrate</name>
    </ligand>
</feature>
<feature type="binding site" evidence="1">
    <location>
        <begin position="59"/>
        <end position="62"/>
    </location>
    <ligand>
        <name>substrate</name>
    </ligand>
</feature>
<feature type="binding site" evidence="1">
    <location>
        <position position="113"/>
    </location>
    <ligand>
        <name>substrate</name>
    </ligand>
</feature>
<feature type="binding site" evidence="1">
    <location>
        <position position="146"/>
    </location>
    <ligand>
        <name>substrate</name>
    </ligand>
</feature>
<feature type="binding site" evidence="1">
    <location>
        <position position="197"/>
    </location>
    <ligand>
        <name>ATP</name>
        <dbReference type="ChEBI" id="CHEBI:30616"/>
    </ligand>
</feature>
<feature type="binding site" evidence="1">
    <location>
        <position position="319"/>
    </location>
    <ligand>
        <name>ATP</name>
        <dbReference type="ChEBI" id="CHEBI:30616"/>
    </ligand>
</feature>
<feature type="binding site" evidence="1">
    <location>
        <begin position="345"/>
        <end position="348"/>
    </location>
    <ligand>
        <name>ATP</name>
        <dbReference type="ChEBI" id="CHEBI:30616"/>
    </ligand>
</feature>
<accession>A0Q7J1</accession>
<evidence type="ECO:0000255" key="1">
    <source>
        <dbReference type="HAMAP-Rule" id="MF_00145"/>
    </source>
</evidence>
<sequence length="392" mass="41969">MSFLTLKDVDLKDKKVLVRVDFNVPVKDGKVTSKVRIEAAIPTIQYILDQGGAVILMSHLGRPTEGEYDSQFSLEPVAKALSEIINKPVKFAKDWLDGVDVKAGEIVMCENVRFNSGEKKSTDDLSKKIASLGDVFVMDAFATAHRAQASTYGVAKYIPVACAGILLTNEIQALEKALKSPKKPMAAIVGGSKVSTKLSVLNNLLDKVEILIVGGGIANTFIKAEGFDVGNSLYEQDLVAEATEILAKAKALGVNIPVPVDVRVAKEFSENAQAIIKKVSDVAADEMILDIGPESEKRIAELLKSANTILWNGPVGVFEFDNFAEGTKALSLSIAQSHAFSVAGGGDTIAAIEKFGIKDQVSYISTAGGAFLEFLEGKKLPAIEILKEKAIR</sequence>
<keyword id="KW-0067">ATP-binding</keyword>
<keyword id="KW-0963">Cytoplasm</keyword>
<keyword id="KW-0324">Glycolysis</keyword>
<keyword id="KW-0418">Kinase</keyword>
<keyword id="KW-0547">Nucleotide-binding</keyword>
<keyword id="KW-0808">Transferase</keyword>
<organism>
    <name type="scientific">Francisella tularensis subsp. novicida (strain U112)</name>
    <dbReference type="NCBI Taxonomy" id="401614"/>
    <lineage>
        <taxon>Bacteria</taxon>
        <taxon>Pseudomonadati</taxon>
        <taxon>Pseudomonadota</taxon>
        <taxon>Gammaproteobacteria</taxon>
        <taxon>Thiotrichales</taxon>
        <taxon>Francisellaceae</taxon>
        <taxon>Francisella</taxon>
    </lineage>
</organism>
<gene>
    <name evidence="1" type="primary">pgk</name>
    <name type="ordered locus">FTN_1331</name>
</gene>